<proteinExistence type="inferred from homology"/>
<comment type="function">
    <text evidence="1">Catalyzes the NADPH-dependent reduction of N-acetyl-5-glutamyl phosphate to yield N-acetyl-L-glutamate 5-semialdehyde.</text>
</comment>
<comment type="catalytic activity">
    <reaction evidence="1">
        <text>N-acetyl-L-glutamate 5-semialdehyde + phosphate + NADP(+) = N-acetyl-L-glutamyl 5-phosphate + NADPH + H(+)</text>
        <dbReference type="Rhea" id="RHEA:21588"/>
        <dbReference type="ChEBI" id="CHEBI:15378"/>
        <dbReference type="ChEBI" id="CHEBI:29123"/>
        <dbReference type="ChEBI" id="CHEBI:43474"/>
        <dbReference type="ChEBI" id="CHEBI:57783"/>
        <dbReference type="ChEBI" id="CHEBI:57936"/>
        <dbReference type="ChEBI" id="CHEBI:58349"/>
        <dbReference type="EC" id="1.2.1.38"/>
    </reaction>
</comment>
<comment type="pathway">
    <text evidence="1">Amino-acid biosynthesis; L-arginine biosynthesis; N(2)-acetyl-L-ornithine from L-glutamate: step 3/4.</text>
</comment>
<comment type="subcellular location">
    <subcellularLocation>
        <location evidence="1">Cytoplasm</location>
    </subcellularLocation>
</comment>
<comment type="similarity">
    <text evidence="1">Belongs to the NAGSA dehydrogenase family. Type 1 subfamily.</text>
</comment>
<accession>Q9K8V2</accession>
<reference key="1">
    <citation type="journal article" date="2000" name="Nucleic Acids Res.">
        <title>Complete genome sequence of the alkaliphilic bacterium Bacillus halodurans and genomic sequence comparison with Bacillus subtilis.</title>
        <authorList>
            <person name="Takami H."/>
            <person name="Nakasone K."/>
            <person name="Takaki Y."/>
            <person name="Maeno G."/>
            <person name="Sasaki R."/>
            <person name="Masui N."/>
            <person name="Fuji F."/>
            <person name="Hirama C."/>
            <person name="Nakamura Y."/>
            <person name="Ogasawara N."/>
            <person name="Kuhara S."/>
            <person name="Horikoshi K."/>
        </authorList>
    </citation>
    <scope>NUCLEOTIDE SEQUENCE [LARGE SCALE GENOMIC DNA]</scope>
    <source>
        <strain>ATCC BAA-125 / DSM 18197 / FERM 7344 / JCM 9153 / C-125</strain>
    </source>
</reference>
<sequence>MKVGIVGATGYGGLELIRLLSQHPNVEEIICYSSSQEGLPLDDMYPHLSGNVRWTLKAIDPEAIRADVDTVFLATPPGVSGELTPDLVKLGLKVIDLSGDLRINEPDVYEAWYKRQAAPVGTIRGAVYGLTEWQRDEIAAAQIIANPGCYPTAVLLGLAPLVQQKWIDPKRIIIDAKSGTSGAGRNPSQITHFSEMNENFKIYQVNQHKHTPEIEQQLRNWDESVGNVTFSTHLVPMVRGIMATIYAEANQAISEKELREHFAYVYETSPFVHVYSEGRYPATKEVFGSNRCHIGVTYDERTNRITVVSVIDNLVKGAAGQAIQNYNVMNGYEETLGLEGSPLYP</sequence>
<gene>
    <name evidence="1" type="primary">argC</name>
    <name type="ordered locus">BH2900</name>
</gene>
<dbReference type="EC" id="1.2.1.38" evidence="1"/>
<dbReference type="EMBL" id="BA000004">
    <property type="protein sequence ID" value="BAB06619.1"/>
    <property type="molecule type" value="Genomic_DNA"/>
</dbReference>
<dbReference type="PIR" id="D84012">
    <property type="entry name" value="D84012"/>
</dbReference>
<dbReference type="RefSeq" id="WP_010899047.1">
    <property type="nucleotide sequence ID" value="NC_002570.2"/>
</dbReference>
<dbReference type="SMR" id="Q9K8V2"/>
<dbReference type="STRING" id="272558.gene:10728810"/>
<dbReference type="GeneID" id="87598427"/>
<dbReference type="KEGG" id="bha:BH2900"/>
<dbReference type="eggNOG" id="COG0002">
    <property type="taxonomic scope" value="Bacteria"/>
</dbReference>
<dbReference type="HOGENOM" id="CLU_006384_0_1_9"/>
<dbReference type="OrthoDB" id="9801289at2"/>
<dbReference type="UniPathway" id="UPA00068">
    <property type="reaction ID" value="UER00108"/>
</dbReference>
<dbReference type="Proteomes" id="UP000001258">
    <property type="component" value="Chromosome"/>
</dbReference>
<dbReference type="GO" id="GO:0005737">
    <property type="term" value="C:cytoplasm"/>
    <property type="evidence" value="ECO:0007669"/>
    <property type="project" value="UniProtKB-SubCell"/>
</dbReference>
<dbReference type="GO" id="GO:0003942">
    <property type="term" value="F:N-acetyl-gamma-glutamyl-phosphate reductase activity"/>
    <property type="evidence" value="ECO:0007669"/>
    <property type="project" value="UniProtKB-UniRule"/>
</dbReference>
<dbReference type="GO" id="GO:0051287">
    <property type="term" value="F:NAD binding"/>
    <property type="evidence" value="ECO:0007669"/>
    <property type="project" value="InterPro"/>
</dbReference>
<dbReference type="GO" id="GO:0070401">
    <property type="term" value="F:NADP+ binding"/>
    <property type="evidence" value="ECO:0007669"/>
    <property type="project" value="InterPro"/>
</dbReference>
<dbReference type="GO" id="GO:0006526">
    <property type="term" value="P:L-arginine biosynthetic process"/>
    <property type="evidence" value="ECO:0007669"/>
    <property type="project" value="UniProtKB-UniRule"/>
</dbReference>
<dbReference type="CDD" id="cd23934">
    <property type="entry name" value="AGPR_1_C"/>
    <property type="match status" value="1"/>
</dbReference>
<dbReference type="CDD" id="cd17895">
    <property type="entry name" value="AGPR_1_N"/>
    <property type="match status" value="1"/>
</dbReference>
<dbReference type="FunFam" id="3.30.360.10:FF:000014">
    <property type="entry name" value="N-acetyl-gamma-glutamyl-phosphate reductase"/>
    <property type="match status" value="1"/>
</dbReference>
<dbReference type="Gene3D" id="3.30.360.10">
    <property type="entry name" value="Dihydrodipicolinate Reductase, domain 2"/>
    <property type="match status" value="1"/>
</dbReference>
<dbReference type="Gene3D" id="3.40.50.720">
    <property type="entry name" value="NAD(P)-binding Rossmann-like Domain"/>
    <property type="match status" value="1"/>
</dbReference>
<dbReference type="HAMAP" id="MF_00150">
    <property type="entry name" value="ArgC_type1"/>
    <property type="match status" value="1"/>
</dbReference>
<dbReference type="InterPro" id="IPR023013">
    <property type="entry name" value="AGPR_AS"/>
</dbReference>
<dbReference type="InterPro" id="IPR000706">
    <property type="entry name" value="AGPR_type-1"/>
</dbReference>
<dbReference type="InterPro" id="IPR036291">
    <property type="entry name" value="NAD(P)-bd_dom_sf"/>
</dbReference>
<dbReference type="InterPro" id="IPR050085">
    <property type="entry name" value="NAGSA_dehydrogenase"/>
</dbReference>
<dbReference type="InterPro" id="IPR000534">
    <property type="entry name" value="Semialdehyde_DH_NAD-bd"/>
</dbReference>
<dbReference type="NCBIfam" id="TIGR01850">
    <property type="entry name" value="argC"/>
    <property type="match status" value="1"/>
</dbReference>
<dbReference type="PANTHER" id="PTHR32338:SF10">
    <property type="entry name" value="N-ACETYL-GAMMA-GLUTAMYL-PHOSPHATE REDUCTASE, CHLOROPLASTIC-RELATED"/>
    <property type="match status" value="1"/>
</dbReference>
<dbReference type="PANTHER" id="PTHR32338">
    <property type="entry name" value="N-ACETYL-GAMMA-GLUTAMYL-PHOSPHATE REDUCTASE, CHLOROPLASTIC-RELATED-RELATED"/>
    <property type="match status" value="1"/>
</dbReference>
<dbReference type="Pfam" id="PF01118">
    <property type="entry name" value="Semialdhyde_dh"/>
    <property type="match status" value="1"/>
</dbReference>
<dbReference type="Pfam" id="PF22698">
    <property type="entry name" value="Semialdhyde_dhC_1"/>
    <property type="match status" value="1"/>
</dbReference>
<dbReference type="SMART" id="SM00859">
    <property type="entry name" value="Semialdhyde_dh"/>
    <property type="match status" value="1"/>
</dbReference>
<dbReference type="SUPFAM" id="SSF55347">
    <property type="entry name" value="Glyceraldehyde-3-phosphate dehydrogenase-like, C-terminal domain"/>
    <property type="match status" value="1"/>
</dbReference>
<dbReference type="SUPFAM" id="SSF51735">
    <property type="entry name" value="NAD(P)-binding Rossmann-fold domains"/>
    <property type="match status" value="1"/>
</dbReference>
<dbReference type="PROSITE" id="PS01224">
    <property type="entry name" value="ARGC"/>
    <property type="match status" value="1"/>
</dbReference>
<keyword id="KW-0028">Amino-acid biosynthesis</keyword>
<keyword id="KW-0055">Arginine biosynthesis</keyword>
<keyword id="KW-0963">Cytoplasm</keyword>
<keyword id="KW-0521">NADP</keyword>
<keyword id="KW-0560">Oxidoreductase</keyword>
<keyword id="KW-1185">Reference proteome</keyword>
<evidence type="ECO:0000255" key="1">
    <source>
        <dbReference type="HAMAP-Rule" id="MF_00150"/>
    </source>
</evidence>
<organism>
    <name type="scientific">Halalkalibacterium halodurans (strain ATCC BAA-125 / DSM 18197 / FERM 7344 / JCM 9153 / C-125)</name>
    <name type="common">Bacillus halodurans</name>
    <dbReference type="NCBI Taxonomy" id="272558"/>
    <lineage>
        <taxon>Bacteria</taxon>
        <taxon>Bacillati</taxon>
        <taxon>Bacillota</taxon>
        <taxon>Bacilli</taxon>
        <taxon>Bacillales</taxon>
        <taxon>Bacillaceae</taxon>
        <taxon>Halalkalibacterium (ex Joshi et al. 2022)</taxon>
    </lineage>
</organism>
<feature type="chain" id="PRO_0000112380" description="N-acetyl-gamma-glutamyl-phosphate reductase">
    <location>
        <begin position="1"/>
        <end position="345"/>
    </location>
</feature>
<feature type="active site" evidence="1">
    <location>
        <position position="149"/>
    </location>
</feature>
<protein>
    <recommendedName>
        <fullName evidence="1">N-acetyl-gamma-glutamyl-phosphate reductase</fullName>
        <shortName evidence="1">AGPR</shortName>
        <ecNumber evidence="1">1.2.1.38</ecNumber>
    </recommendedName>
    <alternativeName>
        <fullName evidence="1">N-acetyl-glutamate semialdehyde dehydrogenase</fullName>
        <shortName evidence="1">NAGSA dehydrogenase</shortName>
    </alternativeName>
</protein>
<name>ARGC_HALH5</name>